<accession>Q04JT4</accession>
<gene>
    <name evidence="1" type="primary">queA</name>
    <name type="ordered locus">SPD_1247</name>
</gene>
<keyword id="KW-0963">Cytoplasm</keyword>
<keyword id="KW-0671">Queuosine biosynthesis</keyword>
<keyword id="KW-1185">Reference proteome</keyword>
<keyword id="KW-0949">S-adenosyl-L-methionine</keyword>
<keyword id="KW-0808">Transferase</keyword>
<proteinExistence type="inferred from homology"/>
<sequence length="342" mass="38510">MNTADFDFHLPEELIAQTPLEKRDASKLLIVNRETGEMQDKHFHSIIDMLEPGDALVMNDTRVLPARLYGQKVETGSHVELLLLKNTSGDEWEVLAKPAKRLKVGTRISFGDGRLSAVVTEELTHGGRIVRFEYQRIFLEVLESLGEMPLPPYIHEKLDDRERYQTVYAKESGSAAAPTAGLHFTKELLAEIQAKGVHLVYLTLHVGLGTFRPVSVDNLDEHEMHSEFYQLSEEAAATLRSVKENGGRVIAVGTTSIRTLETIGSKFDGQIQADSGWTNIFIKPGYEWKVVDAFSTNFHLPKSTLVMLVSAFAGRELVLDAYHHSIQEHYRFFSFGDAMFIY</sequence>
<organism>
    <name type="scientific">Streptococcus pneumoniae serotype 2 (strain D39 / NCTC 7466)</name>
    <dbReference type="NCBI Taxonomy" id="373153"/>
    <lineage>
        <taxon>Bacteria</taxon>
        <taxon>Bacillati</taxon>
        <taxon>Bacillota</taxon>
        <taxon>Bacilli</taxon>
        <taxon>Lactobacillales</taxon>
        <taxon>Streptococcaceae</taxon>
        <taxon>Streptococcus</taxon>
    </lineage>
</organism>
<dbReference type="EC" id="2.4.99.17" evidence="1"/>
<dbReference type="EMBL" id="CP000410">
    <property type="protein sequence ID" value="ABJ53981.1"/>
    <property type="molecule type" value="Genomic_DNA"/>
</dbReference>
<dbReference type="RefSeq" id="WP_001090161.1">
    <property type="nucleotide sequence ID" value="NZ_JAMLJR010000005.1"/>
</dbReference>
<dbReference type="SMR" id="Q04JT4"/>
<dbReference type="PaxDb" id="373153-SPD_1247"/>
<dbReference type="KEGG" id="spd:SPD_1247"/>
<dbReference type="eggNOG" id="COG0809">
    <property type="taxonomic scope" value="Bacteria"/>
</dbReference>
<dbReference type="HOGENOM" id="CLU_039110_1_0_9"/>
<dbReference type="BioCyc" id="SPNE373153:G1G6V-1347-MONOMER"/>
<dbReference type="UniPathway" id="UPA00392"/>
<dbReference type="Proteomes" id="UP000001452">
    <property type="component" value="Chromosome"/>
</dbReference>
<dbReference type="GO" id="GO:0005737">
    <property type="term" value="C:cytoplasm"/>
    <property type="evidence" value="ECO:0007669"/>
    <property type="project" value="UniProtKB-SubCell"/>
</dbReference>
<dbReference type="GO" id="GO:0051075">
    <property type="term" value="F:S-adenosylmethionine:tRNA ribosyltransferase-isomerase activity"/>
    <property type="evidence" value="ECO:0007669"/>
    <property type="project" value="UniProtKB-EC"/>
</dbReference>
<dbReference type="GO" id="GO:0008616">
    <property type="term" value="P:queuosine biosynthetic process"/>
    <property type="evidence" value="ECO:0007669"/>
    <property type="project" value="UniProtKB-UniRule"/>
</dbReference>
<dbReference type="GO" id="GO:0002099">
    <property type="term" value="P:tRNA wobble guanine modification"/>
    <property type="evidence" value="ECO:0007669"/>
    <property type="project" value="TreeGrafter"/>
</dbReference>
<dbReference type="FunFam" id="2.40.10.240:FF:000002">
    <property type="entry name" value="S-adenosylmethionine:tRNA ribosyltransferase-isomerase"/>
    <property type="match status" value="1"/>
</dbReference>
<dbReference type="FunFam" id="3.40.1780.10:FF:000001">
    <property type="entry name" value="S-adenosylmethionine:tRNA ribosyltransferase-isomerase"/>
    <property type="match status" value="1"/>
</dbReference>
<dbReference type="Gene3D" id="2.40.10.240">
    <property type="entry name" value="QueA-like"/>
    <property type="match status" value="1"/>
</dbReference>
<dbReference type="Gene3D" id="3.40.1780.10">
    <property type="entry name" value="QueA-like"/>
    <property type="match status" value="1"/>
</dbReference>
<dbReference type="HAMAP" id="MF_00113">
    <property type="entry name" value="QueA"/>
    <property type="match status" value="1"/>
</dbReference>
<dbReference type="InterPro" id="IPR003699">
    <property type="entry name" value="QueA"/>
</dbReference>
<dbReference type="InterPro" id="IPR042118">
    <property type="entry name" value="QueA_dom1"/>
</dbReference>
<dbReference type="InterPro" id="IPR042119">
    <property type="entry name" value="QueA_dom2"/>
</dbReference>
<dbReference type="InterPro" id="IPR036100">
    <property type="entry name" value="QueA_sf"/>
</dbReference>
<dbReference type="NCBIfam" id="NF001140">
    <property type="entry name" value="PRK00147.1"/>
    <property type="match status" value="1"/>
</dbReference>
<dbReference type="NCBIfam" id="TIGR00113">
    <property type="entry name" value="queA"/>
    <property type="match status" value="1"/>
</dbReference>
<dbReference type="PANTHER" id="PTHR30307">
    <property type="entry name" value="S-ADENOSYLMETHIONINE:TRNA RIBOSYLTRANSFERASE-ISOMERASE"/>
    <property type="match status" value="1"/>
</dbReference>
<dbReference type="PANTHER" id="PTHR30307:SF0">
    <property type="entry name" value="S-ADENOSYLMETHIONINE:TRNA RIBOSYLTRANSFERASE-ISOMERASE"/>
    <property type="match status" value="1"/>
</dbReference>
<dbReference type="Pfam" id="PF02547">
    <property type="entry name" value="Queuosine_synth"/>
    <property type="match status" value="1"/>
</dbReference>
<dbReference type="SUPFAM" id="SSF111337">
    <property type="entry name" value="QueA-like"/>
    <property type="match status" value="1"/>
</dbReference>
<name>QUEA_STRP2</name>
<evidence type="ECO:0000255" key="1">
    <source>
        <dbReference type="HAMAP-Rule" id="MF_00113"/>
    </source>
</evidence>
<comment type="function">
    <text evidence="1">Transfers and isomerizes the ribose moiety from AdoMet to the 7-aminomethyl group of 7-deazaguanine (preQ1-tRNA) to give epoxyqueuosine (oQ-tRNA).</text>
</comment>
<comment type="catalytic activity">
    <reaction evidence="1">
        <text>7-aminomethyl-7-carbaguanosine(34) in tRNA + S-adenosyl-L-methionine = epoxyqueuosine(34) in tRNA + adenine + L-methionine + 2 H(+)</text>
        <dbReference type="Rhea" id="RHEA:32155"/>
        <dbReference type="Rhea" id="RHEA-COMP:10342"/>
        <dbReference type="Rhea" id="RHEA-COMP:18582"/>
        <dbReference type="ChEBI" id="CHEBI:15378"/>
        <dbReference type="ChEBI" id="CHEBI:16708"/>
        <dbReference type="ChEBI" id="CHEBI:57844"/>
        <dbReference type="ChEBI" id="CHEBI:59789"/>
        <dbReference type="ChEBI" id="CHEBI:82833"/>
        <dbReference type="ChEBI" id="CHEBI:194443"/>
        <dbReference type="EC" id="2.4.99.17"/>
    </reaction>
</comment>
<comment type="pathway">
    <text evidence="1">tRNA modification; tRNA-queuosine biosynthesis.</text>
</comment>
<comment type="subunit">
    <text evidence="1">Monomer.</text>
</comment>
<comment type="subcellular location">
    <subcellularLocation>
        <location evidence="1">Cytoplasm</location>
    </subcellularLocation>
</comment>
<comment type="similarity">
    <text evidence="1">Belongs to the QueA family.</text>
</comment>
<reference key="1">
    <citation type="journal article" date="2007" name="J. Bacteriol.">
        <title>Genome sequence of Avery's virulent serotype 2 strain D39 of Streptococcus pneumoniae and comparison with that of unencapsulated laboratory strain R6.</title>
        <authorList>
            <person name="Lanie J.A."/>
            <person name="Ng W.-L."/>
            <person name="Kazmierczak K.M."/>
            <person name="Andrzejewski T.M."/>
            <person name="Davidsen T.M."/>
            <person name="Wayne K.J."/>
            <person name="Tettelin H."/>
            <person name="Glass J.I."/>
            <person name="Winkler M.E."/>
        </authorList>
    </citation>
    <scope>NUCLEOTIDE SEQUENCE [LARGE SCALE GENOMIC DNA]</scope>
    <source>
        <strain>D39 / NCTC 7466</strain>
    </source>
</reference>
<protein>
    <recommendedName>
        <fullName evidence="1">S-adenosylmethionine:tRNA ribosyltransferase-isomerase</fullName>
        <ecNumber evidence="1">2.4.99.17</ecNumber>
    </recommendedName>
    <alternativeName>
        <fullName evidence="1">Queuosine biosynthesis protein QueA</fullName>
    </alternativeName>
</protein>
<feature type="chain" id="PRO_1000015288" description="S-adenosylmethionine:tRNA ribosyltransferase-isomerase">
    <location>
        <begin position="1"/>
        <end position="342"/>
    </location>
</feature>